<sequence length="75" mass="8902">MARYFRRRKFCRFTAEGVTEIDYKDIVTLKNYITESGKIVPSRITGTNAKYQRQLARAIKRARYLSLLPYTDLHQ</sequence>
<dbReference type="EMBL" id="CP000851">
    <property type="protein sequence ID" value="ABV88897.1"/>
    <property type="molecule type" value="Genomic_DNA"/>
</dbReference>
<dbReference type="RefSeq" id="WP_005497284.1">
    <property type="nucleotide sequence ID" value="NC_009901.1"/>
</dbReference>
<dbReference type="SMR" id="A8H8L0"/>
<dbReference type="STRING" id="398579.Spea_3584"/>
<dbReference type="KEGG" id="spl:Spea_3584"/>
<dbReference type="eggNOG" id="COG0238">
    <property type="taxonomic scope" value="Bacteria"/>
</dbReference>
<dbReference type="HOGENOM" id="CLU_148710_2_3_6"/>
<dbReference type="OrthoDB" id="9812008at2"/>
<dbReference type="Proteomes" id="UP000002608">
    <property type="component" value="Chromosome"/>
</dbReference>
<dbReference type="GO" id="GO:0022627">
    <property type="term" value="C:cytosolic small ribosomal subunit"/>
    <property type="evidence" value="ECO:0007669"/>
    <property type="project" value="TreeGrafter"/>
</dbReference>
<dbReference type="GO" id="GO:0070181">
    <property type="term" value="F:small ribosomal subunit rRNA binding"/>
    <property type="evidence" value="ECO:0007669"/>
    <property type="project" value="TreeGrafter"/>
</dbReference>
<dbReference type="GO" id="GO:0003735">
    <property type="term" value="F:structural constituent of ribosome"/>
    <property type="evidence" value="ECO:0007669"/>
    <property type="project" value="InterPro"/>
</dbReference>
<dbReference type="GO" id="GO:0006412">
    <property type="term" value="P:translation"/>
    <property type="evidence" value="ECO:0007669"/>
    <property type="project" value="UniProtKB-UniRule"/>
</dbReference>
<dbReference type="FunFam" id="4.10.640.10:FF:000001">
    <property type="entry name" value="30S ribosomal protein S18"/>
    <property type="match status" value="1"/>
</dbReference>
<dbReference type="Gene3D" id="4.10.640.10">
    <property type="entry name" value="Ribosomal protein S18"/>
    <property type="match status" value="1"/>
</dbReference>
<dbReference type="HAMAP" id="MF_00270">
    <property type="entry name" value="Ribosomal_bS18"/>
    <property type="match status" value="1"/>
</dbReference>
<dbReference type="InterPro" id="IPR001648">
    <property type="entry name" value="Ribosomal_bS18"/>
</dbReference>
<dbReference type="InterPro" id="IPR018275">
    <property type="entry name" value="Ribosomal_bS18_CS"/>
</dbReference>
<dbReference type="InterPro" id="IPR036870">
    <property type="entry name" value="Ribosomal_bS18_sf"/>
</dbReference>
<dbReference type="NCBIfam" id="TIGR00165">
    <property type="entry name" value="S18"/>
    <property type="match status" value="1"/>
</dbReference>
<dbReference type="PANTHER" id="PTHR13479">
    <property type="entry name" value="30S RIBOSOMAL PROTEIN S18"/>
    <property type="match status" value="1"/>
</dbReference>
<dbReference type="PANTHER" id="PTHR13479:SF40">
    <property type="entry name" value="SMALL RIBOSOMAL SUBUNIT PROTEIN BS18M"/>
    <property type="match status" value="1"/>
</dbReference>
<dbReference type="Pfam" id="PF01084">
    <property type="entry name" value="Ribosomal_S18"/>
    <property type="match status" value="1"/>
</dbReference>
<dbReference type="PRINTS" id="PR00974">
    <property type="entry name" value="RIBOSOMALS18"/>
</dbReference>
<dbReference type="SUPFAM" id="SSF46911">
    <property type="entry name" value="Ribosomal protein S18"/>
    <property type="match status" value="1"/>
</dbReference>
<dbReference type="PROSITE" id="PS00057">
    <property type="entry name" value="RIBOSOMAL_S18"/>
    <property type="match status" value="1"/>
</dbReference>
<feature type="chain" id="PRO_1000078714" description="Small ribosomal subunit protein bS18">
    <location>
        <begin position="1"/>
        <end position="75"/>
    </location>
</feature>
<comment type="function">
    <text evidence="1">Binds as a heterodimer with protein bS6 to the central domain of the 16S rRNA, where it helps stabilize the platform of the 30S subunit.</text>
</comment>
<comment type="subunit">
    <text evidence="1">Part of the 30S ribosomal subunit. Forms a tight heterodimer with protein bS6.</text>
</comment>
<comment type="similarity">
    <text evidence="1">Belongs to the bacterial ribosomal protein bS18 family.</text>
</comment>
<name>RS18_SHEPA</name>
<reference key="1">
    <citation type="submission" date="2007-10" db="EMBL/GenBank/DDBJ databases">
        <title>Complete sequence of Shewanella pealeana ATCC 700345.</title>
        <authorList>
            <consortium name="US DOE Joint Genome Institute"/>
            <person name="Copeland A."/>
            <person name="Lucas S."/>
            <person name="Lapidus A."/>
            <person name="Barry K."/>
            <person name="Glavina del Rio T."/>
            <person name="Dalin E."/>
            <person name="Tice H."/>
            <person name="Pitluck S."/>
            <person name="Chertkov O."/>
            <person name="Brettin T."/>
            <person name="Bruce D."/>
            <person name="Detter J.C."/>
            <person name="Han C."/>
            <person name="Schmutz J."/>
            <person name="Larimer F."/>
            <person name="Land M."/>
            <person name="Hauser L."/>
            <person name="Kyrpides N."/>
            <person name="Kim E."/>
            <person name="Zhao J.-S.Z."/>
            <person name="Manno D."/>
            <person name="Hawari J."/>
            <person name="Richardson P."/>
        </authorList>
    </citation>
    <scope>NUCLEOTIDE SEQUENCE [LARGE SCALE GENOMIC DNA]</scope>
    <source>
        <strain>ATCC 700345 / ANG-SQ1</strain>
    </source>
</reference>
<gene>
    <name evidence="1" type="primary">rpsR</name>
    <name type="ordered locus">Spea_3584</name>
</gene>
<organism>
    <name type="scientific">Shewanella pealeana (strain ATCC 700345 / ANG-SQ1)</name>
    <dbReference type="NCBI Taxonomy" id="398579"/>
    <lineage>
        <taxon>Bacteria</taxon>
        <taxon>Pseudomonadati</taxon>
        <taxon>Pseudomonadota</taxon>
        <taxon>Gammaproteobacteria</taxon>
        <taxon>Alteromonadales</taxon>
        <taxon>Shewanellaceae</taxon>
        <taxon>Shewanella</taxon>
    </lineage>
</organism>
<proteinExistence type="inferred from homology"/>
<evidence type="ECO:0000255" key="1">
    <source>
        <dbReference type="HAMAP-Rule" id="MF_00270"/>
    </source>
</evidence>
<evidence type="ECO:0000305" key="2"/>
<accession>A8H8L0</accession>
<protein>
    <recommendedName>
        <fullName evidence="1">Small ribosomal subunit protein bS18</fullName>
    </recommendedName>
    <alternativeName>
        <fullName evidence="2">30S ribosomal protein S18</fullName>
    </alternativeName>
</protein>
<keyword id="KW-1185">Reference proteome</keyword>
<keyword id="KW-0687">Ribonucleoprotein</keyword>
<keyword id="KW-0689">Ribosomal protein</keyword>
<keyword id="KW-0694">RNA-binding</keyword>
<keyword id="KW-0699">rRNA-binding</keyword>